<dbReference type="EMBL" id="U51908">
    <property type="protein sequence ID" value="AAB17285.1"/>
    <property type="status" value="ALT_FRAME"/>
    <property type="molecule type" value="mRNA"/>
</dbReference>
<dbReference type="EMBL" id="AB041827">
    <property type="protein sequence ID" value="BAB79257.1"/>
    <property type="molecule type" value="mRNA"/>
</dbReference>
<dbReference type="EMBL" id="AK158943">
    <property type="protein sequence ID" value="BAE34736.1"/>
    <property type="molecule type" value="mRNA"/>
</dbReference>
<dbReference type="EMBL" id="AC122228">
    <property type="status" value="NOT_ANNOTATED_CDS"/>
    <property type="molecule type" value="Genomic_DNA"/>
</dbReference>
<dbReference type="EMBL" id="BC141019">
    <property type="protein sequence ID" value="AAI41020.1"/>
    <property type="molecule type" value="mRNA"/>
</dbReference>
<dbReference type="CCDS" id="CCDS36407.1"/>
<dbReference type="RefSeq" id="NP_032773.2">
    <property type="nucleotide sequence ID" value="NM_008747.3"/>
</dbReference>
<dbReference type="SMR" id="P70310"/>
<dbReference type="CORUM" id="P70310"/>
<dbReference type="FunCoup" id="P70310">
    <property type="interactions" value="433"/>
</dbReference>
<dbReference type="STRING" id="10090.ENSMUSP00000106693"/>
<dbReference type="BindingDB" id="P70310"/>
<dbReference type="DrugCentral" id="P70310"/>
<dbReference type="GuidetoPHARMACOLOGY" id="310"/>
<dbReference type="iPTMnet" id="P70310"/>
<dbReference type="PhosphoSitePlus" id="P70310"/>
<dbReference type="SwissPalm" id="P70310"/>
<dbReference type="PaxDb" id="10090-ENSMUSP00000106693"/>
<dbReference type="ProteomicsDB" id="293771"/>
<dbReference type="Antibodypedia" id="12728">
    <property type="antibodies" value="290 antibodies from 29 providers"/>
</dbReference>
<dbReference type="DNASU" id="18217"/>
<dbReference type="Ensembl" id="ENSMUST00000111064.3">
    <property type="protein sequence ID" value="ENSMUSP00000106693.2"/>
    <property type="gene ID" value="ENSMUSG00000020591.12"/>
</dbReference>
<dbReference type="GeneID" id="18217"/>
<dbReference type="KEGG" id="mmu:18217"/>
<dbReference type="UCSC" id="uc007nbw.1">
    <property type="organism name" value="mouse"/>
</dbReference>
<dbReference type="AGR" id="MGI:108018"/>
<dbReference type="CTD" id="23620"/>
<dbReference type="MGI" id="MGI:108018">
    <property type="gene designation" value="Ntsr2"/>
</dbReference>
<dbReference type="VEuPathDB" id="HostDB:ENSMUSG00000020591"/>
<dbReference type="eggNOG" id="KOG3656">
    <property type="taxonomic scope" value="Eukaryota"/>
</dbReference>
<dbReference type="GeneTree" id="ENSGT01120000271823"/>
<dbReference type="HOGENOM" id="CLU_009579_6_5_1"/>
<dbReference type="InParanoid" id="P70310"/>
<dbReference type="OMA" id="YSFRLWG"/>
<dbReference type="OrthoDB" id="9835116at2759"/>
<dbReference type="PhylomeDB" id="P70310"/>
<dbReference type="TreeFam" id="TF337167"/>
<dbReference type="Reactome" id="R-MMU-375276">
    <property type="pathway name" value="Peptide ligand-binding receptors"/>
</dbReference>
<dbReference type="Reactome" id="R-MMU-416476">
    <property type="pathway name" value="G alpha (q) signalling events"/>
</dbReference>
<dbReference type="BioGRID-ORCS" id="18217">
    <property type="hits" value="1 hit in 78 CRISPR screens"/>
</dbReference>
<dbReference type="PRO" id="PR:P70310"/>
<dbReference type="Proteomes" id="UP000000589">
    <property type="component" value="Chromosome 12"/>
</dbReference>
<dbReference type="RNAct" id="P70310">
    <property type="molecule type" value="protein"/>
</dbReference>
<dbReference type="Bgee" id="ENSMUSG00000020591">
    <property type="expression patterns" value="Expressed in globus pallidus and 89 other cell types or tissues"/>
</dbReference>
<dbReference type="ExpressionAtlas" id="P70310">
    <property type="expression patterns" value="baseline and differential"/>
</dbReference>
<dbReference type="GO" id="GO:0016020">
    <property type="term" value="C:membrane"/>
    <property type="evidence" value="ECO:0000314"/>
    <property type="project" value="MGI"/>
</dbReference>
<dbReference type="GO" id="GO:0005886">
    <property type="term" value="C:plasma membrane"/>
    <property type="evidence" value="ECO:0007669"/>
    <property type="project" value="UniProtKB-SubCell"/>
</dbReference>
<dbReference type="GO" id="GO:0016492">
    <property type="term" value="F:G protein-coupled neurotensin receptor activity"/>
    <property type="evidence" value="ECO:0000314"/>
    <property type="project" value="MGI"/>
</dbReference>
<dbReference type="GO" id="GO:0007200">
    <property type="term" value="P:phospholipase C-activating G protein-coupled receptor signaling pathway"/>
    <property type="evidence" value="ECO:0000314"/>
    <property type="project" value="MGI"/>
</dbReference>
<dbReference type="GO" id="GO:0042391">
    <property type="term" value="P:regulation of membrane potential"/>
    <property type="evidence" value="ECO:0000314"/>
    <property type="project" value="MGI"/>
</dbReference>
<dbReference type="Gene3D" id="1.20.1070.10">
    <property type="entry name" value="Rhodopsin 7-helix transmembrane proteins"/>
    <property type="match status" value="1"/>
</dbReference>
<dbReference type="InterPro" id="IPR000276">
    <property type="entry name" value="GPCR_Rhodpsn"/>
</dbReference>
<dbReference type="InterPro" id="IPR017452">
    <property type="entry name" value="GPCR_Rhodpsn_7TM"/>
</dbReference>
<dbReference type="InterPro" id="IPR003986">
    <property type="entry name" value="NT2_rcpt"/>
</dbReference>
<dbReference type="InterPro" id="IPR003984">
    <property type="entry name" value="NT_rcpt"/>
</dbReference>
<dbReference type="PANTHER" id="PTHR24243">
    <property type="entry name" value="G-PROTEIN COUPLED RECEPTOR"/>
    <property type="match status" value="1"/>
</dbReference>
<dbReference type="PANTHER" id="PTHR24243:SF10">
    <property type="entry name" value="NEUROTENSIN RECEPTOR TYPE 2"/>
    <property type="match status" value="1"/>
</dbReference>
<dbReference type="Pfam" id="PF00001">
    <property type="entry name" value="7tm_1"/>
    <property type="match status" value="1"/>
</dbReference>
<dbReference type="PRINTS" id="PR00237">
    <property type="entry name" value="GPCRRHODOPSN"/>
</dbReference>
<dbReference type="PRINTS" id="PR01479">
    <property type="entry name" value="NEUROTENSINR"/>
</dbReference>
<dbReference type="PRINTS" id="PR01481">
    <property type="entry name" value="NEUROTENSN2R"/>
</dbReference>
<dbReference type="SUPFAM" id="SSF81321">
    <property type="entry name" value="Family A G protein-coupled receptor-like"/>
    <property type="match status" value="1"/>
</dbReference>
<dbReference type="PROSITE" id="PS00237">
    <property type="entry name" value="G_PROTEIN_RECEP_F1_1"/>
    <property type="match status" value="1"/>
</dbReference>
<dbReference type="PROSITE" id="PS50262">
    <property type="entry name" value="G_PROTEIN_RECEP_F1_2"/>
    <property type="match status" value="1"/>
</dbReference>
<accession>P70310</accession>
<accession>Q8VIF5</accession>
<organism>
    <name type="scientific">Mus musculus</name>
    <name type="common">Mouse</name>
    <dbReference type="NCBI Taxonomy" id="10090"/>
    <lineage>
        <taxon>Eukaryota</taxon>
        <taxon>Metazoa</taxon>
        <taxon>Chordata</taxon>
        <taxon>Craniata</taxon>
        <taxon>Vertebrata</taxon>
        <taxon>Euteleostomi</taxon>
        <taxon>Mammalia</taxon>
        <taxon>Eutheria</taxon>
        <taxon>Euarchontoglires</taxon>
        <taxon>Glires</taxon>
        <taxon>Rodentia</taxon>
        <taxon>Myomorpha</taxon>
        <taxon>Muroidea</taxon>
        <taxon>Muridae</taxon>
        <taxon>Murinae</taxon>
        <taxon>Mus</taxon>
        <taxon>Mus</taxon>
    </lineage>
</organism>
<evidence type="ECO:0000250" key="1">
    <source>
        <dbReference type="UniProtKB" id="Q63384"/>
    </source>
</evidence>
<evidence type="ECO:0000255" key="2"/>
<evidence type="ECO:0000255" key="3">
    <source>
        <dbReference type="PROSITE-ProRule" id="PRU00521"/>
    </source>
</evidence>
<evidence type="ECO:0000305" key="4"/>
<reference key="1">
    <citation type="journal article" date="1996" name="J. Neurosci.">
        <title>Structure, functional expression, and cerebral localization of the levocabastine-sensitive neurotensin/neuromedin N receptor from mouse brain.</title>
        <authorList>
            <person name="Mazella J."/>
            <person name="Botto J.-M."/>
            <person name="Guillemare E."/>
            <person name="Coppola T."/>
            <person name="Sarret P."/>
            <person name="Vincent J.-P."/>
        </authorList>
    </citation>
    <scope>NUCLEOTIDE SEQUENCE [MRNA]</scope>
    <source>
        <strain>BALB/cJ</strain>
        <tissue>Brain</tissue>
    </source>
</reference>
<reference key="2">
    <citation type="journal article" date="2001" name="Brain Res. Mol. Brain Res.">
        <title>Mouse neurotensin receptor 2 gene (Ntsr2): genomic organization, transcriptional regulation and genetic mapping on chromosome 12.</title>
        <authorList>
            <person name="Sun Y.J."/>
            <person name="Maeno H."/>
            <person name="Aoki S."/>
            <person name="Wada K."/>
        </authorList>
    </citation>
    <scope>NUCLEOTIDE SEQUENCE [MRNA]</scope>
    <source>
        <strain>C57BL/6J</strain>
        <tissue>Brain</tissue>
    </source>
</reference>
<reference key="3">
    <citation type="journal article" date="2005" name="Science">
        <title>The transcriptional landscape of the mammalian genome.</title>
        <authorList>
            <person name="Carninci P."/>
            <person name="Kasukawa T."/>
            <person name="Katayama S."/>
            <person name="Gough J."/>
            <person name="Frith M.C."/>
            <person name="Maeda N."/>
            <person name="Oyama R."/>
            <person name="Ravasi T."/>
            <person name="Lenhard B."/>
            <person name="Wells C."/>
            <person name="Kodzius R."/>
            <person name="Shimokawa K."/>
            <person name="Bajic V.B."/>
            <person name="Brenner S.E."/>
            <person name="Batalov S."/>
            <person name="Forrest A.R."/>
            <person name="Zavolan M."/>
            <person name="Davis M.J."/>
            <person name="Wilming L.G."/>
            <person name="Aidinis V."/>
            <person name="Allen J.E."/>
            <person name="Ambesi-Impiombato A."/>
            <person name="Apweiler R."/>
            <person name="Aturaliya R.N."/>
            <person name="Bailey T.L."/>
            <person name="Bansal M."/>
            <person name="Baxter L."/>
            <person name="Beisel K.W."/>
            <person name="Bersano T."/>
            <person name="Bono H."/>
            <person name="Chalk A.M."/>
            <person name="Chiu K.P."/>
            <person name="Choudhary V."/>
            <person name="Christoffels A."/>
            <person name="Clutterbuck D.R."/>
            <person name="Crowe M.L."/>
            <person name="Dalla E."/>
            <person name="Dalrymple B.P."/>
            <person name="de Bono B."/>
            <person name="Della Gatta G."/>
            <person name="di Bernardo D."/>
            <person name="Down T."/>
            <person name="Engstrom P."/>
            <person name="Fagiolini M."/>
            <person name="Faulkner G."/>
            <person name="Fletcher C.F."/>
            <person name="Fukushima T."/>
            <person name="Furuno M."/>
            <person name="Futaki S."/>
            <person name="Gariboldi M."/>
            <person name="Georgii-Hemming P."/>
            <person name="Gingeras T.R."/>
            <person name="Gojobori T."/>
            <person name="Green R.E."/>
            <person name="Gustincich S."/>
            <person name="Harbers M."/>
            <person name="Hayashi Y."/>
            <person name="Hensch T.K."/>
            <person name="Hirokawa N."/>
            <person name="Hill D."/>
            <person name="Huminiecki L."/>
            <person name="Iacono M."/>
            <person name="Ikeo K."/>
            <person name="Iwama A."/>
            <person name="Ishikawa T."/>
            <person name="Jakt M."/>
            <person name="Kanapin A."/>
            <person name="Katoh M."/>
            <person name="Kawasawa Y."/>
            <person name="Kelso J."/>
            <person name="Kitamura H."/>
            <person name="Kitano H."/>
            <person name="Kollias G."/>
            <person name="Krishnan S.P."/>
            <person name="Kruger A."/>
            <person name="Kummerfeld S.K."/>
            <person name="Kurochkin I.V."/>
            <person name="Lareau L.F."/>
            <person name="Lazarevic D."/>
            <person name="Lipovich L."/>
            <person name="Liu J."/>
            <person name="Liuni S."/>
            <person name="McWilliam S."/>
            <person name="Madan Babu M."/>
            <person name="Madera M."/>
            <person name="Marchionni L."/>
            <person name="Matsuda H."/>
            <person name="Matsuzawa S."/>
            <person name="Miki H."/>
            <person name="Mignone F."/>
            <person name="Miyake S."/>
            <person name="Morris K."/>
            <person name="Mottagui-Tabar S."/>
            <person name="Mulder N."/>
            <person name="Nakano N."/>
            <person name="Nakauchi H."/>
            <person name="Ng P."/>
            <person name="Nilsson R."/>
            <person name="Nishiguchi S."/>
            <person name="Nishikawa S."/>
            <person name="Nori F."/>
            <person name="Ohara O."/>
            <person name="Okazaki Y."/>
            <person name="Orlando V."/>
            <person name="Pang K.C."/>
            <person name="Pavan W.J."/>
            <person name="Pavesi G."/>
            <person name="Pesole G."/>
            <person name="Petrovsky N."/>
            <person name="Piazza S."/>
            <person name="Reed J."/>
            <person name="Reid J.F."/>
            <person name="Ring B.Z."/>
            <person name="Ringwald M."/>
            <person name="Rost B."/>
            <person name="Ruan Y."/>
            <person name="Salzberg S.L."/>
            <person name="Sandelin A."/>
            <person name="Schneider C."/>
            <person name="Schoenbach C."/>
            <person name="Sekiguchi K."/>
            <person name="Semple C.A."/>
            <person name="Seno S."/>
            <person name="Sessa L."/>
            <person name="Sheng Y."/>
            <person name="Shibata Y."/>
            <person name="Shimada H."/>
            <person name="Shimada K."/>
            <person name="Silva D."/>
            <person name="Sinclair B."/>
            <person name="Sperling S."/>
            <person name="Stupka E."/>
            <person name="Sugiura K."/>
            <person name="Sultana R."/>
            <person name="Takenaka Y."/>
            <person name="Taki K."/>
            <person name="Tammoja K."/>
            <person name="Tan S.L."/>
            <person name="Tang S."/>
            <person name="Taylor M.S."/>
            <person name="Tegner J."/>
            <person name="Teichmann S.A."/>
            <person name="Ueda H.R."/>
            <person name="van Nimwegen E."/>
            <person name="Verardo R."/>
            <person name="Wei C.L."/>
            <person name="Yagi K."/>
            <person name="Yamanishi H."/>
            <person name="Zabarovsky E."/>
            <person name="Zhu S."/>
            <person name="Zimmer A."/>
            <person name="Hide W."/>
            <person name="Bult C."/>
            <person name="Grimmond S.M."/>
            <person name="Teasdale R.D."/>
            <person name="Liu E.T."/>
            <person name="Brusic V."/>
            <person name="Quackenbush J."/>
            <person name="Wahlestedt C."/>
            <person name="Mattick J.S."/>
            <person name="Hume D.A."/>
            <person name="Kai C."/>
            <person name="Sasaki D."/>
            <person name="Tomaru Y."/>
            <person name="Fukuda S."/>
            <person name="Kanamori-Katayama M."/>
            <person name="Suzuki M."/>
            <person name="Aoki J."/>
            <person name="Arakawa T."/>
            <person name="Iida J."/>
            <person name="Imamura K."/>
            <person name="Itoh M."/>
            <person name="Kato T."/>
            <person name="Kawaji H."/>
            <person name="Kawagashira N."/>
            <person name="Kawashima T."/>
            <person name="Kojima M."/>
            <person name="Kondo S."/>
            <person name="Konno H."/>
            <person name="Nakano K."/>
            <person name="Ninomiya N."/>
            <person name="Nishio T."/>
            <person name="Okada M."/>
            <person name="Plessy C."/>
            <person name="Shibata K."/>
            <person name="Shiraki T."/>
            <person name="Suzuki S."/>
            <person name="Tagami M."/>
            <person name="Waki K."/>
            <person name="Watahiki A."/>
            <person name="Okamura-Oho Y."/>
            <person name="Suzuki H."/>
            <person name="Kawai J."/>
            <person name="Hayashizaki Y."/>
        </authorList>
    </citation>
    <scope>NUCLEOTIDE SEQUENCE [LARGE SCALE MRNA]</scope>
    <source>
        <strain>C57BL/6J</strain>
        <tissue>Visual cortex</tissue>
    </source>
</reference>
<reference key="4">
    <citation type="journal article" date="2009" name="PLoS Biol.">
        <title>Lineage-specific biology revealed by a finished genome assembly of the mouse.</title>
        <authorList>
            <person name="Church D.M."/>
            <person name="Goodstadt L."/>
            <person name="Hillier L.W."/>
            <person name="Zody M.C."/>
            <person name="Goldstein S."/>
            <person name="She X."/>
            <person name="Bult C.J."/>
            <person name="Agarwala R."/>
            <person name="Cherry J.L."/>
            <person name="DiCuccio M."/>
            <person name="Hlavina W."/>
            <person name="Kapustin Y."/>
            <person name="Meric P."/>
            <person name="Maglott D."/>
            <person name="Birtle Z."/>
            <person name="Marques A.C."/>
            <person name="Graves T."/>
            <person name="Zhou S."/>
            <person name="Teague B."/>
            <person name="Potamousis K."/>
            <person name="Churas C."/>
            <person name="Place M."/>
            <person name="Herschleb J."/>
            <person name="Runnheim R."/>
            <person name="Forrest D."/>
            <person name="Amos-Landgraf J."/>
            <person name="Schwartz D.C."/>
            <person name="Cheng Z."/>
            <person name="Lindblad-Toh K."/>
            <person name="Eichler E.E."/>
            <person name="Ponting C.P."/>
        </authorList>
    </citation>
    <scope>NUCLEOTIDE SEQUENCE [LARGE SCALE GENOMIC DNA]</scope>
    <source>
        <strain>C57BL/6J</strain>
    </source>
</reference>
<reference key="5">
    <citation type="journal article" date="2004" name="Genome Res.">
        <title>The status, quality, and expansion of the NIH full-length cDNA project: the Mammalian Gene Collection (MGC).</title>
        <authorList>
            <consortium name="The MGC Project Team"/>
        </authorList>
    </citation>
    <scope>NUCLEOTIDE SEQUENCE [LARGE SCALE MRNA]</scope>
    <source>
        <tissue>Brain</tissue>
    </source>
</reference>
<comment type="function">
    <text>Receptor for the tridecapeptide neurotensin. It is associated with G proteins that activate a phosphatidylinositol-calcium second messenger system.</text>
</comment>
<comment type="subcellular location">
    <subcellularLocation>
        <location>Cell membrane</location>
        <topology>Multi-pass membrane protein</topology>
    </subcellularLocation>
</comment>
<comment type="tissue specificity">
    <text>Expressed maximally in the cerebellum, hippocampus, piriform cortex and neocortex of adult brain.</text>
</comment>
<comment type="developmental stage">
    <text>Expressed poorly in 7-day-old brain. Expression increases at day 15 to reach a maximal level in 35-day-old brain.</text>
</comment>
<comment type="similarity">
    <text evidence="3">Belongs to the G-protein coupled receptor 1 family. Neurotensin receptor subfamily. NTSR2 sub-subfamily.</text>
</comment>
<comment type="sequence caution" evidence="4">
    <conflict type="frameshift">
        <sequence resource="EMBL-CDS" id="AAB17285"/>
    </conflict>
</comment>
<proteinExistence type="evidence at transcript level"/>
<keyword id="KW-1003">Cell membrane</keyword>
<keyword id="KW-1015">Disulfide bond</keyword>
<keyword id="KW-0297">G-protein coupled receptor</keyword>
<keyword id="KW-0449">Lipoprotein</keyword>
<keyword id="KW-0472">Membrane</keyword>
<keyword id="KW-0564">Palmitate</keyword>
<keyword id="KW-0597">Phosphoprotein</keyword>
<keyword id="KW-0675">Receptor</keyword>
<keyword id="KW-1185">Reference proteome</keyword>
<keyword id="KW-0807">Transducer</keyword>
<keyword id="KW-0812">Transmembrane</keyword>
<keyword id="KW-1133">Transmembrane helix</keyword>
<protein>
    <recommendedName>
        <fullName>Neurotensin receptor type 2</fullName>
        <shortName>NT-R-2</shortName>
        <shortName>NTR2</shortName>
    </recommendedName>
    <alternativeName>
        <fullName>Low-affinity levocabastine-sensitive neurotensin receptor</fullName>
    </alternativeName>
    <alternativeName>
        <fullName>NTRL</fullName>
    </alternativeName>
</protein>
<sequence>METSSLWPPRPSPSAGLSLEARLGVDTRLWAKVLFTALYSLIFALGTAGNALSVHVVLKARAGRPGRLRYHVLSLALSALLLLLISVPMELYNFVWSHYPWVFGDLGCRGYYFVRELCAYATVLSVASLSAERCLAVCQPLRARRLLTPRRTRRLLSLVWVASLGLALPMAVIMGQKHEMERADGEPEPASRVCTVLVSRATLQVFIQVNVLVSFVLPLALTAFLNGITVNHLVALYSQVPSASAQVNSIPSRLELLSEEGLLGFITWRKTLSLGVQASLVRHKDASQIRSLQHSAQVLRAIVAVYVICWLPYHARRLMYCYIPDDGWTDELYDFYHYFYMVTNTLFYVSSAVTPVLYNAVSSSFRKLFLESLSSLCGEQRSVVPLPQEAPESTTSTYSFRLWGSPRNPSLGEIQV</sequence>
<feature type="chain" id="PRO_0000069950" description="Neurotensin receptor type 2">
    <location>
        <begin position="1"/>
        <end position="416"/>
    </location>
</feature>
<feature type="topological domain" description="Extracellular" evidence="2">
    <location>
        <begin position="1"/>
        <end position="32"/>
    </location>
</feature>
<feature type="transmembrane region" description="Helical; Name=1" evidence="2">
    <location>
        <begin position="33"/>
        <end position="55"/>
    </location>
</feature>
<feature type="topological domain" description="Cytoplasmic" evidence="2">
    <location>
        <begin position="56"/>
        <end position="64"/>
    </location>
</feature>
<feature type="transmembrane region" description="Helical; Name=2" evidence="2">
    <location>
        <begin position="65"/>
        <end position="87"/>
    </location>
</feature>
<feature type="topological domain" description="Extracellular" evidence="2">
    <location>
        <begin position="88"/>
        <end position="109"/>
    </location>
</feature>
<feature type="transmembrane region" description="Helical; Name=3" evidence="2">
    <location>
        <begin position="110"/>
        <end position="131"/>
    </location>
</feature>
<feature type="topological domain" description="Cytoplasmic" evidence="2">
    <location>
        <begin position="132"/>
        <end position="154"/>
    </location>
</feature>
<feature type="transmembrane region" description="Helical; Name=4" evidence="2">
    <location>
        <begin position="155"/>
        <end position="176"/>
    </location>
</feature>
<feature type="topological domain" description="Extracellular" evidence="2">
    <location>
        <begin position="177"/>
        <end position="217"/>
    </location>
</feature>
<feature type="transmembrane region" description="Helical; Name=5" evidence="2">
    <location>
        <begin position="218"/>
        <end position="237"/>
    </location>
</feature>
<feature type="topological domain" description="Cytoplasmic" evidence="2">
    <location>
        <begin position="238"/>
        <end position="297"/>
    </location>
</feature>
<feature type="transmembrane region" description="Helical; Name=6" evidence="2">
    <location>
        <begin position="298"/>
        <end position="318"/>
    </location>
</feature>
<feature type="topological domain" description="Extracellular" evidence="2">
    <location>
        <begin position="319"/>
        <end position="337"/>
    </location>
</feature>
<feature type="transmembrane region" description="Helical; Name=7" evidence="2">
    <location>
        <begin position="338"/>
        <end position="358"/>
    </location>
</feature>
<feature type="topological domain" description="Cytoplasmic" evidence="2">
    <location>
        <begin position="359"/>
        <end position="416"/>
    </location>
</feature>
<feature type="modified residue" description="Phosphoserine" evidence="1">
    <location>
        <position position="410"/>
    </location>
</feature>
<feature type="lipid moiety-binding region" description="S-palmitoyl cysteine" evidence="2">
    <location>
        <position position="377"/>
    </location>
</feature>
<feature type="disulfide bond" evidence="3">
    <location>
        <begin position="108"/>
        <end position="194"/>
    </location>
</feature>
<feature type="sequence conflict" description="In Ref. 1; AAB17285." evidence="4" ref="1">
    <original>A</original>
    <variation>T</variation>
    <location>
        <position position="62"/>
    </location>
</feature>
<feature type="sequence conflict" description="In Ref. 1; AAB17285." evidence="4" ref="1">
    <original>R</original>
    <variation>C</variation>
    <location>
        <position position="153"/>
    </location>
</feature>
<feature type="sequence conflict" description="In Ref. 1; AAB17285." evidence="4" ref="1">
    <original>F</original>
    <variation>I</variation>
    <location>
        <position position="224"/>
    </location>
</feature>
<gene>
    <name type="primary">Ntsr2</name>
</gene>
<name>NTR2_MOUSE</name>